<gene>
    <name evidence="1" type="primary">ubiA</name>
    <name type="ordered locus">NGK_0460</name>
</gene>
<accession>B4RK00</accession>
<reference key="1">
    <citation type="journal article" date="2008" name="J. Bacteriol.">
        <title>Complete genome sequence of Neisseria gonorrhoeae NCCP11945.</title>
        <authorList>
            <person name="Chung G.T."/>
            <person name="Yoo J.S."/>
            <person name="Oh H.B."/>
            <person name="Lee Y.S."/>
            <person name="Cha S.H."/>
            <person name="Kim S.J."/>
            <person name="Yoo C.K."/>
        </authorList>
    </citation>
    <scope>NUCLEOTIDE SEQUENCE [LARGE SCALE GENOMIC DNA]</scope>
    <source>
        <strain>NCCP11945</strain>
    </source>
</reference>
<protein>
    <recommendedName>
        <fullName evidence="1">4-hydroxybenzoate octaprenyltransferase</fullName>
        <ecNumber evidence="1">2.5.1.39</ecNumber>
    </recommendedName>
    <alternativeName>
        <fullName evidence="1">4-HB polyprenyltransferase</fullName>
    </alternativeName>
</protein>
<evidence type="ECO:0000255" key="1">
    <source>
        <dbReference type="HAMAP-Rule" id="MF_01635"/>
    </source>
</evidence>
<proteinExistence type="inferred from homology"/>
<comment type="function">
    <text evidence="1">Catalyzes the prenylation of para-hydroxybenzoate (PHB) with an all-trans polyprenyl group. Mediates the second step in the final reaction sequence of ubiquinone-8 (UQ-8) biosynthesis, which is the condensation of the polyisoprenoid side chain with PHB, generating the first membrane-bound Q intermediate 3-octaprenyl-4-hydroxybenzoate.</text>
</comment>
<comment type="catalytic activity">
    <reaction evidence="1">
        <text>all-trans-octaprenyl diphosphate + 4-hydroxybenzoate = 4-hydroxy-3-(all-trans-octaprenyl)benzoate + diphosphate</text>
        <dbReference type="Rhea" id="RHEA:27782"/>
        <dbReference type="ChEBI" id="CHEBI:1617"/>
        <dbReference type="ChEBI" id="CHEBI:17879"/>
        <dbReference type="ChEBI" id="CHEBI:33019"/>
        <dbReference type="ChEBI" id="CHEBI:57711"/>
        <dbReference type="EC" id="2.5.1.39"/>
    </reaction>
</comment>
<comment type="cofactor">
    <cofactor evidence="1">
        <name>Mg(2+)</name>
        <dbReference type="ChEBI" id="CHEBI:18420"/>
    </cofactor>
</comment>
<comment type="pathway">
    <text evidence="1">Cofactor biosynthesis; ubiquinone biosynthesis.</text>
</comment>
<comment type="subcellular location">
    <subcellularLocation>
        <location evidence="1">Cell inner membrane</location>
        <topology evidence="1">Multi-pass membrane protein</topology>
    </subcellularLocation>
</comment>
<comment type="similarity">
    <text evidence="1">Belongs to the UbiA prenyltransferase family.</text>
</comment>
<dbReference type="EC" id="2.5.1.39" evidence="1"/>
<dbReference type="EMBL" id="CP001050">
    <property type="protein sequence ID" value="ACF29151.1"/>
    <property type="molecule type" value="Genomic_DNA"/>
</dbReference>
<dbReference type="RefSeq" id="WP_003687700.1">
    <property type="nucleotide sequence ID" value="NC_011035.1"/>
</dbReference>
<dbReference type="SMR" id="B4RK00"/>
<dbReference type="GeneID" id="66752650"/>
<dbReference type="KEGG" id="ngk:NGK_0460"/>
<dbReference type="HOGENOM" id="CLU_034879_1_0_4"/>
<dbReference type="UniPathway" id="UPA00232"/>
<dbReference type="Proteomes" id="UP000002564">
    <property type="component" value="Chromosome"/>
</dbReference>
<dbReference type="GO" id="GO:0005886">
    <property type="term" value="C:plasma membrane"/>
    <property type="evidence" value="ECO:0007669"/>
    <property type="project" value="UniProtKB-SubCell"/>
</dbReference>
<dbReference type="GO" id="GO:0008412">
    <property type="term" value="F:4-hydroxybenzoate polyprenyltransferase activity"/>
    <property type="evidence" value="ECO:0007669"/>
    <property type="project" value="UniProtKB-UniRule"/>
</dbReference>
<dbReference type="GO" id="GO:0006744">
    <property type="term" value="P:ubiquinone biosynthetic process"/>
    <property type="evidence" value="ECO:0007669"/>
    <property type="project" value="UniProtKB-UniRule"/>
</dbReference>
<dbReference type="CDD" id="cd13959">
    <property type="entry name" value="PT_UbiA_COQ2"/>
    <property type="match status" value="1"/>
</dbReference>
<dbReference type="FunFam" id="1.10.357.140:FF:000002">
    <property type="entry name" value="4-hydroxybenzoate octaprenyltransferase"/>
    <property type="match status" value="1"/>
</dbReference>
<dbReference type="FunFam" id="1.20.120.1780:FF:000001">
    <property type="entry name" value="4-hydroxybenzoate octaprenyltransferase"/>
    <property type="match status" value="1"/>
</dbReference>
<dbReference type="Gene3D" id="1.10.357.140">
    <property type="entry name" value="UbiA prenyltransferase"/>
    <property type="match status" value="1"/>
</dbReference>
<dbReference type="Gene3D" id="1.20.120.1780">
    <property type="entry name" value="UbiA prenyltransferase"/>
    <property type="match status" value="1"/>
</dbReference>
<dbReference type="HAMAP" id="MF_01635">
    <property type="entry name" value="UbiA"/>
    <property type="match status" value="1"/>
</dbReference>
<dbReference type="InterPro" id="IPR006370">
    <property type="entry name" value="HB_polyprenyltransferase-like"/>
</dbReference>
<dbReference type="InterPro" id="IPR039653">
    <property type="entry name" value="Prenyltransferase"/>
</dbReference>
<dbReference type="InterPro" id="IPR000537">
    <property type="entry name" value="UbiA_prenyltransferase"/>
</dbReference>
<dbReference type="InterPro" id="IPR030470">
    <property type="entry name" value="UbiA_prenylTrfase_CS"/>
</dbReference>
<dbReference type="InterPro" id="IPR044878">
    <property type="entry name" value="UbiA_sf"/>
</dbReference>
<dbReference type="NCBIfam" id="TIGR01474">
    <property type="entry name" value="ubiA_proteo"/>
    <property type="match status" value="1"/>
</dbReference>
<dbReference type="PANTHER" id="PTHR11048:SF28">
    <property type="entry name" value="4-HYDROXYBENZOATE POLYPRENYLTRANSFERASE, MITOCHONDRIAL"/>
    <property type="match status" value="1"/>
</dbReference>
<dbReference type="PANTHER" id="PTHR11048">
    <property type="entry name" value="PRENYLTRANSFERASES"/>
    <property type="match status" value="1"/>
</dbReference>
<dbReference type="Pfam" id="PF01040">
    <property type="entry name" value="UbiA"/>
    <property type="match status" value="1"/>
</dbReference>
<dbReference type="PROSITE" id="PS00943">
    <property type="entry name" value="UBIA"/>
    <property type="match status" value="1"/>
</dbReference>
<keyword id="KW-0997">Cell inner membrane</keyword>
<keyword id="KW-1003">Cell membrane</keyword>
<keyword id="KW-0460">Magnesium</keyword>
<keyword id="KW-0472">Membrane</keyword>
<keyword id="KW-0808">Transferase</keyword>
<keyword id="KW-0812">Transmembrane</keyword>
<keyword id="KW-1133">Transmembrane helix</keyword>
<keyword id="KW-0831">Ubiquinone biosynthesis</keyword>
<feature type="chain" id="PRO_1000186677" description="4-hydroxybenzoate octaprenyltransferase">
    <location>
        <begin position="1"/>
        <end position="296"/>
    </location>
</feature>
<feature type="transmembrane region" description="Helical" evidence="1">
    <location>
        <begin position="28"/>
        <end position="48"/>
    </location>
</feature>
<feature type="transmembrane region" description="Helical" evidence="1">
    <location>
        <begin position="51"/>
        <end position="71"/>
    </location>
</feature>
<feature type="transmembrane region" description="Helical" evidence="1">
    <location>
        <begin position="102"/>
        <end position="122"/>
    </location>
</feature>
<feature type="transmembrane region" description="Helical" evidence="1">
    <location>
        <begin position="143"/>
        <end position="163"/>
    </location>
</feature>
<feature type="transmembrane region" description="Helical" evidence="1">
    <location>
        <begin position="174"/>
        <end position="194"/>
    </location>
</feature>
<feature type="transmembrane region" description="Helical" evidence="1">
    <location>
        <begin position="212"/>
        <end position="232"/>
    </location>
</feature>
<feature type="transmembrane region" description="Helical" evidence="1">
    <location>
        <begin position="233"/>
        <end position="253"/>
    </location>
</feature>
<feature type="transmembrane region" description="Helical" evidence="1">
    <location>
        <begin position="274"/>
        <end position="294"/>
    </location>
</feature>
<name>UBIA_NEIG2</name>
<organism>
    <name type="scientific">Neisseria gonorrhoeae (strain NCCP11945)</name>
    <dbReference type="NCBI Taxonomy" id="521006"/>
    <lineage>
        <taxon>Bacteria</taxon>
        <taxon>Pseudomonadati</taxon>
        <taxon>Pseudomonadota</taxon>
        <taxon>Betaproteobacteria</taxon>
        <taxon>Neisseriales</taxon>
        <taxon>Neisseriaceae</taxon>
        <taxon>Neisseria</taxon>
    </lineage>
</organism>
<sequence>MNLKSPLFLRLSDRLDVYIRLMRADKPIGTLLLLWPTYWALWLASDGIPDLAVLAAFTIGTFLMRSAGCVINDFADRDFDGAVERTKNRPFAQGRVKKKEALLLTAFLCLLAALCLIPLNHLTWLMSLPALFLALTYPFTKRFFPIPQFYLGLAFSFGIPMAFAAVGNSVPVEAWILFAANVLWTLAYDTVYAMADKEDDLKIGIKTSAVTFGRYDIAAVMLCHGGFTLLMAVLGAVIGAAWAYWTAIPIVLLLQYRQYAAIKSRVRQICFETFLANNRIGWVWFAAIFAHTFFAK</sequence>